<feature type="chain" id="PRO_1000010619" description="Peptidyl-tRNA hydrolase">
    <location>
        <begin position="1"/>
        <end position="192"/>
    </location>
</feature>
<feature type="active site" description="Proton acceptor" evidence="1">
    <location>
        <position position="23"/>
    </location>
</feature>
<feature type="binding site" evidence="1">
    <location>
        <position position="18"/>
    </location>
    <ligand>
        <name>tRNA</name>
        <dbReference type="ChEBI" id="CHEBI:17843"/>
    </ligand>
</feature>
<feature type="binding site" evidence="1">
    <location>
        <position position="69"/>
    </location>
    <ligand>
        <name>tRNA</name>
        <dbReference type="ChEBI" id="CHEBI:17843"/>
    </ligand>
</feature>
<feature type="binding site" evidence="1">
    <location>
        <position position="71"/>
    </location>
    <ligand>
        <name>tRNA</name>
        <dbReference type="ChEBI" id="CHEBI:17843"/>
    </ligand>
</feature>
<feature type="binding site" evidence="1">
    <location>
        <position position="117"/>
    </location>
    <ligand>
        <name>tRNA</name>
        <dbReference type="ChEBI" id="CHEBI:17843"/>
    </ligand>
</feature>
<feature type="site" description="Discriminates between blocked and unblocked aminoacyl-tRNA" evidence="1">
    <location>
        <position position="13"/>
    </location>
</feature>
<feature type="site" description="Stabilizes the basic form of H active site to accept a proton" evidence="1">
    <location>
        <position position="96"/>
    </location>
</feature>
<keyword id="KW-0963">Cytoplasm</keyword>
<keyword id="KW-0378">Hydrolase</keyword>
<keyword id="KW-0694">RNA-binding</keyword>
<keyword id="KW-0820">tRNA-binding</keyword>
<protein>
    <recommendedName>
        <fullName evidence="1">Peptidyl-tRNA hydrolase</fullName>
        <shortName evidence="1">Pth</shortName>
        <ecNumber evidence="1">3.1.1.29</ecNumber>
    </recommendedName>
</protein>
<name>PTH_NEIMF</name>
<proteinExistence type="inferred from homology"/>
<sequence>MSNTIKMVVGLGNPGKEYEQTRHNAGFWFLDELAWKWKASFKEEKKFFGEVARAALPDGDVWLLKPATFMNRSGQAVAALAQFYKIKPEEILVVHDELDIPCGRIKFKLGGGNGGHNGLKDIQAKLGTADYYRLRLGIGHPGDRNLVVGYVLNKPSTEHRRQIDDAVAKSLQAIPDILAGKWEEATRFLHSK</sequence>
<dbReference type="EC" id="3.1.1.29" evidence="1"/>
<dbReference type="EMBL" id="AM421808">
    <property type="protein sequence ID" value="CAM10035.1"/>
    <property type="molecule type" value="Genomic_DNA"/>
</dbReference>
<dbReference type="RefSeq" id="WP_002221185.1">
    <property type="nucleotide sequence ID" value="NC_008767.1"/>
</dbReference>
<dbReference type="SMR" id="A1KT53"/>
<dbReference type="KEGG" id="nmc:NMC0747"/>
<dbReference type="HOGENOM" id="CLU_062456_3_1_4"/>
<dbReference type="Proteomes" id="UP000002286">
    <property type="component" value="Chromosome"/>
</dbReference>
<dbReference type="GO" id="GO:0005737">
    <property type="term" value="C:cytoplasm"/>
    <property type="evidence" value="ECO:0007669"/>
    <property type="project" value="UniProtKB-SubCell"/>
</dbReference>
<dbReference type="GO" id="GO:0004045">
    <property type="term" value="F:peptidyl-tRNA hydrolase activity"/>
    <property type="evidence" value="ECO:0007669"/>
    <property type="project" value="UniProtKB-UniRule"/>
</dbReference>
<dbReference type="GO" id="GO:0000049">
    <property type="term" value="F:tRNA binding"/>
    <property type="evidence" value="ECO:0007669"/>
    <property type="project" value="UniProtKB-UniRule"/>
</dbReference>
<dbReference type="GO" id="GO:0006515">
    <property type="term" value="P:protein quality control for misfolded or incompletely synthesized proteins"/>
    <property type="evidence" value="ECO:0007669"/>
    <property type="project" value="UniProtKB-UniRule"/>
</dbReference>
<dbReference type="GO" id="GO:0072344">
    <property type="term" value="P:rescue of stalled ribosome"/>
    <property type="evidence" value="ECO:0007669"/>
    <property type="project" value="UniProtKB-UniRule"/>
</dbReference>
<dbReference type="CDD" id="cd00462">
    <property type="entry name" value="PTH"/>
    <property type="match status" value="1"/>
</dbReference>
<dbReference type="FunFam" id="3.40.50.1470:FF:000001">
    <property type="entry name" value="Peptidyl-tRNA hydrolase"/>
    <property type="match status" value="1"/>
</dbReference>
<dbReference type="Gene3D" id="3.40.50.1470">
    <property type="entry name" value="Peptidyl-tRNA hydrolase"/>
    <property type="match status" value="1"/>
</dbReference>
<dbReference type="HAMAP" id="MF_00083">
    <property type="entry name" value="Pept_tRNA_hydro_bact"/>
    <property type="match status" value="1"/>
</dbReference>
<dbReference type="InterPro" id="IPR001328">
    <property type="entry name" value="Pept_tRNA_hydro"/>
</dbReference>
<dbReference type="InterPro" id="IPR018171">
    <property type="entry name" value="Pept_tRNA_hydro_CS"/>
</dbReference>
<dbReference type="InterPro" id="IPR036416">
    <property type="entry name" value="Pept_tRNA_hydro_sf"/>
</dbReference>
<dbReference type="NCBIfam" id="TIGR00447">
    <property type="entry name" value="pth"/>
    <property type="match status" value="1"/>
</dbReference>
<dbReference type="PANTHER" id="PTHR17224">
    <property type="entry name" value="PEPTIDYL-TRNA HYDROLASE"/>
    <property type="match status" value="1"/>
</dbReference>
<dbReference type="PANTHER" id="PTHR17224:SF1">
    <property type="entry name" value="PEPTIDYL-TRNA HYDROLASE"/>
    <property type="match status" value="1"/>
</dbReference>
<dbReference type="Pfam" id="PF01195">
    <property type="entry name" value="Pept_tRNA_hydro"/>
    <property type="match status" value="1"/>
</dbReference>
<dbReference type="SUPFAM" id="SSF53178">
    <property type="entry name" value="Peptidyl-tRNA hydrolase-like"/>
    <property type="match status" value="1"/>
</dbReference>
<dbReference type="PROSITE" id="PS01195">
    <property type="entry name" value="PEPT_TRNA_HYDROL_1"/>
    <property type="match status" value="1"/>
</dbReference>
<dbReference type="PROSITE" id="PS01196">
    <property type="entry name" value="PEPT_TRNA_HYDROL_2"/>
    <property type="match status" value="1"/>
</dbReference>
<evidence type="ECO:0000255" key="1">
    <source>
        <dbReference type="HAMAP-Rule" id="MF_00083"/>
    </source>
</evidence>
<organism>
    <name type="scientific">Neisseria meningitidis serogroup C / serotype 2a (strain ATCC 700532 / DSM 15464 / FAM18)</name>
    <dbReference type="NCBI Taxonomy" id="272831"/>
    <lineage>
        <taxon>Bacteria</taxon>
        <taxon>Pseudomonadati</taxon>
        <taxon>Pseudomonadota</taxon>
        <taxon>Betaproteobacteria</taxon>
        <taxon>Neisseriales</taxon>
        <taxon>Neisseriaceae</taxon>
        <taxon>Neisseria</taxon>
    </lineage>
</organism>
<accession>A1KT53</accession>
<gene>
    <name evidence="1" type="primary">pth</name>
    <name type="ordered locus">NMC0747</name>
</gene>
<reference key="1">
    <citation type="journal article" date="2007" name="PLoS Genet.">
        <title>Meningococcal genetic variation mechanisms viewed through comparative analysis of serogroup C strain FAM18.</title>
        <authorList>
            <person name="Bentley S.D."/>
            <person name="Vernikos G.S."/>
            <person name="Snyder L.A.S."/>
            <person name="Churcher C."/>
            <person name="Arrowsmith C."/>
            <person name="Chillingworth T."/>
            <person name="Cronin A."/>
            <person name="Davis P.H."/>
            <person name="Holroyd N.E."/>
            <person name="Jagels K."/>
            <person name="Maddison M."/>
            <person name="Moule S."/>
            <person name="Rabbinowitsch E."/>
            <person name="Sharp S."/>
            <person name="Unwin L."/>
            <person name="Whitehead S."/>
            <person name="Quail M.A."/>
            <person name="Achtman M."/>
            <person name="Barrell B.G."/>
            <person name="Saunders N.J."/>
            <person name="Parkhill J."/>
        </authorList>
    </citation>
    <scope>NUCLEOTIDE SEQUENCE [LARGE SCALE GENOMIC DNA]</scope>
    <source>
        <strain>ATCC 700532 / DSM 15464 / FAM18</strain>
    </source>
</reference>
<comment type="function">
    <text evidence="1">Hydrolyzes ribosome-free peptidyl-tRNAs (with 1 or more amino acids incorporated), which drop off the ribosome during protein synthesis, or as a result of ribosome stalling.</text>
</comment>
<comment type="function">
    <text evidence="1">Catalyzes the release of premature peptidyl moieties from peptidyl-tRNA molecules trapped in stalled 50S ribosomal subunits, and thus maintains levels of free tRNAs and 50S ribosomes.</text>
</comment>
<comment type="catalytic activity">
    <reaction evidence="1">
        <text>an N-acyl-L-alpha-aminoacyl-tRNA + H2O = an N-acyl-L-amino acid + a tRNA + H(+)</text>
        <dbReference type="Rhea" id="RHEA:54448"/>
        <dbReference type="Rhea" id="RHEA-COMP:10123"/>
        <dbReference type="Rhea" id="RHEA-COMP:13883"/>
        <dbReference type="ChEBI" id="CHEBI:15377"/>
        <dbReference type="ChEBI" id="CHEBI:15378"/>
        <dbReference type="ChEBI" id="CHEBI:59874"/>
        <dbReference type="ChEBI" id="CHEBI:78442"/>
        <dbReference type="ChEBI" id="CHEBI:138191"/>
        <dbReference type="EC" id="3.1.1.29"/>
    </reaction>
</comment>
<comment type="subunit">
    <text evidence="1">Monomer.</text>
</comment>
<comment type="subcellular location">
    <subcellularLocation>
        <location evidence="1">Cytoplasm</location>
    </subcellularLocation>
</comment>
<comment type="similarity">
    <text evidence="1">Belongs to the PTH family.</text>
</comment>